<organism>
    <name type="scientific">Gibberella zeae (strain ATCC MYA-4620 / CBS 123657 / FGSC 9075 / NRRL 31084 / PH-1)</name>
    <name type="common">Wheat head blight fungus</name>
    <name type="synonym">Fusarium graminearum</name>
    <dbReference type="NCBI Taxonomy" id="229533"/>
    <lineage>
        <taxon>Eukaryota</taxon>
        <taxon>Fungi</taxon>
        <taxon>Dikarya</taxon>
        <taxon>Ascomycota</taxon>
        <taxon>Pezizomycotina</taxon>
        <taxon>Sordariomycetes</taxon>
        <taxon>Hypocreomycetidae</taxon>
        <taxon>Hypocreales</taxon>
        <taxon>Nectriaceae</taxon>
        <taxon>Fusarium</taxon>
    </lineage>
</organism>
<reference key="1">
    <citation type="journal article" date="2007" name="Science">
        <title>The Fusarium graminearum genome reveals a link between localized polymorphism and pathogen specialization.</title>
        <authorList>
            <person name="Cuomo C.A."/>
            <person name="Gueldener U."/>
            <person name="Xu J.-R."/>
            <person name="Trail F."/>
            <person name="Turgeon B.G."/>
            <person name="Di Pietro A."/>
            <person name="Walton J.D."/>
            <person name="Ma L.-J."/>
            <person name="Baker S.E."/>
            <person name="Rep M."/>
            <person name="Adam G."/>
            <person name="Antoniw J."/>
            <person name="Baldwin T."/>
            <person name="Calvo S.E."/>
            <person name="Chang Y.-L."/>
            <person name="DeCaprio D."/>
            <person name="Gale L.R."/>
            <person name="Gnerre S."/>
            <person name="Goswami R.S."/>
            <person name="Hammond-Kosack K."/>
            <person name="Harris L.J."/>
            <person name="Hilburn K."/>
            <person name="Kennell J.C."/>
            <person name="Kroken S."/>
            <person name="Magnuson J.K."/>
            <person name="Mannhaupt G."/>
            <person name="Mauceli E.W."/>
            <person name="Mewes H.-W."/>
            <person name="Mitterbauer R."/>
            <person name="Muehlbauer G."/>
            <person name="Muensterkoetter M."/>
            <person name="Nelson D."/>
            <person name="O'Donnell K."/>
            <person name="Ouellet T."/>
            <person name="Qi W."/>
            <person name="Quesneville H."/>
            <person name="Roncero M.I.G."/>
            <person name="Seong K.-Y."/>
            <person name="Tetko I.V."/>
            <person name="Urban M."/>
            <person name="Waalwijk C."/>
            <person name="Ward T.J."/>
            <person name="Yao J."/>
            <person name="Birren B.W."/>
            <person name="Kistler H.C."/>
        </authorList>
    </citation>
    <scope>NUCLEOTIDE SEQUENCE [LARGE SCALE GENOMIC DNA]</scope>
    <source>
        <strain>ATCC MYA-4620 / CBS 123657 / FGSC 9075 / NRRL 31084 / PH-1</strain>
    </source>
</reference>
<reference key="2">
    <citation type="journal article" date="2010" name="Nature">
        <title>Comparative genomics reveals mobile pathogenicity chromosomes in Fusarium.</title>
        <authorList>
            <person name="Ma L.-J."/>
            <person name="van der Does H.C."/>
            <person name="Borkovich K.A."/>
            <person name="Coleman J.J."/>
            <person name="Daboussi M.-J."/>
            <person name="Di Pietro A."/>
            <person name="Dufresne M."/>
            <person name="Freitag M."/>
            <person name="Grabherr M."/>
            <person name="Henrissat B."/>
            <person name="Houterman P.M."/>
            <person name="Kang S."/>
            <person name="Shim W.-B."/>
            <person name="Woloshuk C."/>
            <person name="Xie X."/>
            <person name="Xu J.-R."/>
            <person name="Antoniw J."/>
            <person name="Baker S.E."/>
            <person name="Bluhm B.H."/>
            <person name="Breakspear A."/>
            <person name="Brown D.W."/>
            <person name="Butchko R.A.E."/>
            <person name="Chapman S."/>
            <person name="Coulson R."/>
            <person name="Coutinho P.M."/>
            <person name="Danchin E.G.J."/>
            <person name="Diener A."/>
            <person name="Gale L.R."/>
            <person name="Gardiner D.M."/>
            <person name="Goff S."/>
            <person name="Hammond-Kosack K.E."/>
            <person name="Hilburn K."/>
            <person name="Hua-Van A."/>
            <person name="Jonkers W."/>
            <person name="Kazan K."/>
            <person name="Kodira C.D."/>
            <person name="Koehrsen M."/>
            <person name="Kumar L."/>
            <person name="Lee Y.-H."/>
            <person name="Li L."/>
            <person name="Manners J.M."/>
            <person name="Miranda-Saavedra D."/>
            <person name="Mukherjee M."/>
            <person name="Park G."/>
            <person name="Park J."/>
            <person name="Park S.-Y."/>
            <person name="Proctor R.H."/>
            <person name="Regev A."/>
            <person name="Ruiz-Roldan M.C."/>
            <person name="Sain D."/>
            <person name="Sakthikumar S."/>
            <person name="Sykes S."/>
            <person name="Schwartz D.C."/>
            <person name="Turgeon B.G."/>
            <person name="Wapinski I."/>
            <person name="Yoder O."/>
            <person name="Young S."/>
            <person name="Zeng Q."/>
            <person name="Zhou S."/>
            <person name="Galagan J."/>
            <person name="Cuomo C.A."/>
            <person name="Kistler H.C."/>
            <person name="Rep M."/>
        </authorList>
    </citation>
    <scope>GENOME REANNOTATION</scope>
    <source>
        <strain>ATCC MYA-4620 / CBS 123657 / FGSC 9075 / NRRL 31084 / PH-1</strain>
    </source>
</reference>
<reference key="3">
    <citation type="journal article" date="2015" name="BMC Genomics">
        <title>The completed genome sequence of the pathogenic ascomycete fungus Fusarium graminearum.</title>
        <authorList>
            <person name="King R."/>
            <person name="Urban M."/>
            <person name="Hammond-Kosack M.C.U."/>
            <person name="Hassani-Pak K."/>
            <person name="Hammond-Kosack K.E."/>
        </authorList>
    </citation>
    <scope>NUCLEOTIDE SEQUENCE [LARGE SCALE GENOMIC DNA]</scope>
    <source>
        <strain>ATCC MYA-4620 / CBS 123657 / FGSC 9075 / NRRL 31084 / PH-1</strain>
    </source>
</reference>
<dbReference type="EMBL" id="DS231663">
    <property type="protein sequence ID" value="ESU07972.1"/>
    <property type="molecule type" value="Genomic_DNA"/>
</dbReference>
<dbReference type="EMBL" id="HG970332">
    <property type="protein sequence ID" value="CEF74832.1"/>
    <property type="molecule type" value="Genomic_DNA"/>
</dbReference>
<dbReference type="RefSeq" id="XP_011318457.1">
    <property type="nucleotide sequence ID" value="XM_011320155.1"/>
</dbReference>
<dbReference type="SMR" id="Q4IJT5"/>
<dbReference type="FunCoup" id="Q4IJT5">
    <property type="interactions" value="880"/>
</dbReference>
<dbReference type="STRING" id="229533.Q4IJT5"/>
<dbReference type="GeneID" id="23549895"/>
<dbReference type="KEGG" id="fgr:FGSG_02523"/>
<dbReference type="VEuPathDB" id="FungiDB:FGRAMPH1_01G06055"/>
<dbReference type="eggNOG" id="KOG1727">
    <property type="taxonomic scope" value="Eukaryota"/>
</dbReference>
<dbReference type="HOGENOM" id="CLU_095877_0_0_1"/>
<dbReference type="InParanoid" id="Q4IJT5"/>
<dbReference type="OrthoDB" id="105361at110618"/>
<dbReference type="Proteomes" id="UP000070720">
    <property type="component" value="Chromosome 1"/>
</dbReference>
<dbReference type="GO" id="GO:0005737">
    <property type="term" value="C:cytoplasm"/>
    <property type="evidence" value="ECO:0007669"/>
    <property type="project" value="UniProtKB-KW"/>
</dbReference>
<dbReference type="GO" id="GO:0005874">
    <property type="term" value="C:microtubule"/>
    <property type="evidence" value="ECO:0007669"/>
    <property type="project" value="UniProtKB-KW"/>
</dbReference>
<dbReference type="GO" id="GO:0005509">
    <property type="term" value="F:calcium ion binding"/>
    <property type="evidence" value="ECO:0007669"/>
    <property type="project" value="TreeGrafter"/>
</dbReference>
<dbReference type="GO" id="GO:0006412">
    <property type="term" value="P:translation"/>
    <property type="evidence" value="ECO:0007669"/>
    <property type="project" value="UniProtKB-KW"/>
</dbReference>
<dbReference type="FunFam" id="2.170.150.10:FF:000002">
    <property type="entry name" value="Translationally-controlled tumor protein homolog"/>
    <property type="match status" value="1"/>
</dbReference>
<dbReference type="Gene3D" id="2.170.150.10">
    <property type="entry name" value="Metal Binding Protein, Guanine Nucleotide Exchange Factor, Chain A"/>
    <property type="match status" value="1"/>
</dbReference>
<dbReference type="InterPro" id="IPR011057">
    <property type="entry name" value="Mss4-like_sf"/>
</dbReference>
<dbReference type="InterPro" id="IPR011323">
    <property type="entry name" value="Mss4/transl-control_tumour"/>
</dbReference>
<dbReference type="InterPro" id="IPR034737">
    <property type="entry name" value="TCTP"/>
</dbReference>
<dbReference type="InterPro" id="IPR018103">
    <property type="entry name" value="Translation_control_tumour_CS"/>
</dbReference>
<dbReference type="InterPro" id="IPR018105">
    <property type="entry name" value="Translational_control_tumour_p"/>
</dbReference>
<dbReference type="PANTHER" id="PTHR11991">
    <property type="entry name" value="TRANSLATIONALLY CONTROLLED TUMOR PROTEIN-RELATED"/>
    <property type="match status" value="1"/>
</dbReference>
<dbReference type="PANTHER" id="PTHR11991:SF0">
    <property type="entry name" value="TRANSLATIONALLY-CONTROLLED TUMOR PROTEIN"/>
    <property type="match status" value="1"/>
</dbReference>
<dbReference type="Pfam" id="PF00838">
    <property type="entry name" value="TCTP"/>
    <property type="match status" value="1"/>
</dbReference>
<dbReference type="PRINTS" id="PR01653">
    <property type="entry name" value="TCTPROTEIN"/>
</dbReference>
<dbReference type="SUPFAM" id="SSF51316">
    <property type="entry name" value="Mss4-like"/>
    <property type="match status" value="1"/>
</dbReference>
<dbReference type="PROSITE" id="PS01002">
    <property type="entry name" value="TCTP_1"/>
    <property type="match status" value="1"/>
</dbReference>
<dbReference type="PROSITE" id="PS01003">
    <property type="entry name" value="TCTP_2"/>
    <property type="match status" value="1"/>
</dbReference>
<dbReference type="PROSITE" id="PS51797">
    <property type="entry name" value="TCTP_3"/>
    <property type="match status" value="1"/>
</dbReference>
<accession>Q4IJT5</accession>
<accession>A0A0E0RUA7</accession>
<accession>V6R222</accession>
<sequence>MLIYNDILNGDELISDSYDLKEVDGIVYEADCAMIEEGAVEVNIGANASAEEAAEDLDDGAVKVNNIVNSFRLQSTTFDKKSYLAYLKGYMKAIKAKLQENGSSAEDIKAFETGASKFVKDTIVPKFKDFEFYTGESMDPDGMVVLLNYREDGVTPYTIFWKHGLKETKV</sequence>
<feature type="chain" id="PRO_0000252324" description="Translationally-controlled tumor protein homolog">
    <location>
        <begin position="1"/>
        <end position="170"/>
    </location>
</feature>
<feature type="domain" description="TCTP" evidence="2">
    <location>
        <begin position="1"/>
        <end position="170"/>
    </location>
</feature>
<evidence type="ECO:0000250" key="1"/>
<evidence type="ECO:0000255" key="2">
    <source>
        <dbReference type="PROSITE-ProRule" id="PRU01133"/>
    </source>
</evidence>
<keyword id="KW-0963">Cytoplasm</keyword>
<keyword id="KW-0206">Cytoskeleton</keyword>
<keyword id="KW-0493">Microtubule</keyword>
<keyword id="KW-0648">Protein biosynthesis</keyword>
<keyword id="KW-1185">Reference proteome</keyword>
<gene>
    <name type="ORF">FGRRES_02523</name>
    <name type="ORF">FGSG_02523</name>
</gene>
<proteinExistence type="inferred from homology"/>
<comment type="function">
    <text evidence="1">Involved in protein synthesis. Involved in microtubule stabilization (By similarity).</text>
</comment>
<comment type="subcellular location">
    <subcellularLocation>
        <location evidence="1">Cytoplasm</location>
        <location evidence="1">Cytoskeleton</location>
    </subcellularLocation>
</comment>
<comment type="similarity">
    <text evidence="2">Belongs to the TCTP family.</text>
</comment>
<name>TCTP_GIBZE</name>
<protein>
    <recommendedName>
        <fullName>Translationally-controlled tumor protein homolog</fullName>
        <shortName>TCTP</shortName>
    </recommendedName>
</protein>